<dbReference type="EMBL" id="CR936257">
    <property type="protein sequence ID" value="CAI48156.1"/>
    <property type="molecule type" value="Genomic_DNA"/>
</dbReference>
<dbReference type="RefSeq" id="WP_011321795.1">
    <property type="nucleotide sequence ID" value="NC_007426.1"/>
</dbReference>
<dbReference type="SMR" id="Q3IUM4"/>
<dbReference type="STRING" id="348780.NP_0130A"/>
<dbReference type="EnsemblBacteria" id="CAI48156">
    <property type="protein sequence ID" value="CAI48156"/>
    <property type="gene ID" value="NP_0130A"/>
</dbReference>
<dbReference type="GeneID" id="3703232"/>
<dbReference type="KEGG" id="nph:NP_0130A"/>
<dbReference type="eggNOG" id="arCOG01559">
    <property type="taxonomic scope" value="Archaea"/>
</dbReference>
<dbReference type="HOGENOM" id="CLU_002794_11_1_2"/>
<dbReference type="OrthoDB" id="6290at2157"/>
<dbReference type="Proteomes" id="UP000002698">
    <property type="component" value="Chromosome"/>
</dbReference>
<dbReference type="GO" id="GO:0005829">
    <property type="term" value="C:cytosol"/>
    <property type="evidence" value="ECO:0007669"/>
    <property type="project" value="TreeGrafter"/>
</dbReference>
<dbReference type="GO" id="GO:1990904">
    <property type="term" value="C:ribonucleoprotein complex"/>
    <property type="evidence" value="ECO:0007669"/>
    <property type="project" value="TreeGrafter"/>
</dbReference>
<dbReference type="GO" id="GO:0005525">
    <property type="term" value="F:GTP binding"/>
    <property type="evidence" value="ECO:0007669"/>
    <property type="project" value="UniProtKB-UniRule"/>
</dbReference>
<dbReference type="GO" id="GO:0003924">
    <property type="term" value="F:GTPase activity"/>
    <property type="evidence" value="ECO:0007669"/>
    <property type="project" value="InterPro"/>
</dbReference>
<dbReference type="GO" id="GO:0003746">
    <property type="term" value="F:translation elongation factor activity"/>
    <property type="evidence" value="ECO:0007669"/>
    <property type="project" value="UniProtKB-UniRule"/>
</dbReference>
<dbReference type="CDD" id="cd01681">
    <property type="entry name" value="aeEF2_snRNP_like_IV"/>
    <property type="match status" value="1"/>
</dbReference>
<dbReference type="CDD" id="cd01885">
    <property type="entry name" value="EF2"/>
    <property type="match status" value="1"/>
</dbReference>
<dbReference type="CDD" id="cd16268">
    <property type="entry name" value="EF2_II"/>
    <property type="match status" value="1"/>
</dbReference>
<dbReference type="CDD" id="cd16261">
    <property type="entry name" value="EF2_snRNP_III"/>
    <property type="match status" value="1"/>
</dbReference>
<dbReference type="CDD" id="cd01514">
    <property type="entry name" value="Elongation_Factor_C"/>
    <property type="match status" value="1"/>
</dbReference>
<dbReference type="FunFam" id="2.40.30.10:FF:000110">
    <property type="entry name" value="Elongation factor 2"/>
    <property type="match status" value="1"/>
</dbReference>
<dbReference type="FunFam" id="3.30.70.240:FF:000010">
    <property type="entry name" value="Elongation factor 2"/>
    <property type="match status" value="1"/>
</dbReference>
<dbReference type="FunFam" id="3.40.50.300:FF:000684">
    <property type="entry name" value="Elongation factor 2"/>
    <property type="match status" value="1"/>
</dbReference>
<dbReference type="FunFam" id="3.30.70.870:FF:000002">
    <property type="entry name" value="Translation elongation factor 2"/>
    <property type="match status" value="1"/>
</dbReference>
<dbReference type="Gene3D" id="3.30.230.10">
    <property type="match status" value="1"/>
</dbReference>
<dbReference type="Gene3D" id="3.30.70.240">
    <property type="match status" value="1"/>
</dbReference>
<dbReference type="Gene3D" id="3.30.70.870">
    <property type="entry name" value="Elongation Factor G (Translational Gtpase), domain 3"/>
    <property type="match status" value="1"/>
</dbReference>
<dbReference type="Gene3D" id="3.40.50.300">
    <property type="entry name" value="P-loop containing nucleotide triphosphate hydrolases"/>
    <property type="match status" value="1"/>
</dbReference>
<dbReference type="Gene3D" id="2.40.30.10">
    <property type="entry name" value="Translation factors"/>
    <property type="match status" value="1"/>
</dbReference>
<dbReference type="HAMAP" id="MF_00054_A">
    <property type="entry name" value="EF_G_EF_2_A"/>
    <property type="match status" value="1"/>
</dbReference>
<dbReference type="InterPro" id="IPR041095">
    <property type="entry name" value="EFG_II"/>
</dbReference>
<dbReference type="InterPro" id="IPR035647">
    <property type="entry name" value="EFG_III/V"/>
</dbReference>
<dbReference type="InterPro" id="IPR000640">
    <property type="entry name" value="EFG_V-like"/>
</dbReference>
<dbReference type="InterPro" id="IPR004161">
    <property type="entry name" value="EFTu-like_2"/>
</dbReference>
<dbReference type="InterPro" id="IPR031157">
    <property type="entry name" value="G_TR_CS"/>
</dbReference>
<dbReference type="InterPro" id="IPR027417">
    <property type="entry name" value="P-loop_NTPase"/>
</dbReference>
<dbReference type="InterPro" id="IPR020568">
    <property type="entry name" value="Ribosomal_Su5_D2-typ_SF"/>
</dbReference>
<dbReference type="InterPro" id="IPR014721">
    <property type="entry name" value="Ribsml_uS5_D2-typ_fold_subgr"/>
</dbReference>
<dbReference type="InterPro" id="IPR005225">
    <property type="entry name" value="Small_GTP-bd"/>
</dbReference>
<dbReference type="InterPro" id="IPR000795">
    <property type="entry name" value="T_Tr_GTP-bd_dom"/>
</dbReference>
<dbReference type="InterPro" id="IPR009000">
    <property type="entry name" value="Transl_B-barrel_sf"/>
</dbReference>
<dbReference type="InterPro" id="IPR004543">
    <property type="entry name" value="Transl_elong_EFG/EF2_arc"/>
</dbReference>
<dbReference type="InterPro" id="IPR005517">
    <property type="entry name" value="Transl_elong_EFG/EF2_IV"/>
</dbReference>
<dbReference type="NCBIfam" id="TIGR00490">
    <property type="entry name" value="aEF-2"/>
    <property type="match status" value="1"/>
</dbReference>
<dbReference type="NCBIfam" id="TIGR00231">
    <property type="entry name" value="small_GTP"/>
    <property type="match status" value="1"/>
</dbReference>
<dbReference type="PANTHER" id="PTHR42908:SF3">
    <property type="entry name" value="ELONGATION FACTOR-LIKE GTPASE 1"/>
    <property type="match status" value="1"/>
</dbReference>
<dbReference type="PANTHER" id="PTHR42908">
    <property type="entry name" value="TRANSLATION ELONGATION FACTOR-RELATED"/>
    <property type="match status" value="1"/>
</dbReference>
<dbReference type="Pfam" id="PF00679">
    <property type="entry name" value="EFG_C"/>
    <property type="match status" value="1"/>
</dbReference>
<dbReference type="Pfam" id="PF14492">
    <property type="entry name" value="EFG_III"/>
    <property type="match status" value="1"/>
</dbReference>
<dbReference type="Pfam" id="PF03764">
    <property type="entry name" value="EFG_IV"/>
    <property type="match status" value="1"/>
</dbReference>
<dbReference type="Pfam" id="PF00009">
    <property type="entry name" value="GTP_EFTU"/>
    <property type="match status" value="1"/>
</dbReference>
<dbReference type="Pfam" id="PF03144">
    <property type="entry name" value="GTP_EFTU_D2"/>
    <property type="match status" value="1"/>
</dbReference>
<dbReference type="PRINTS" id="PR00315">
    <property type="entry name" value="ELONGATNFCT"/>
</dbReference>
<dbReference type="SMART" id="SM00838">
    <property type="entry name" value="EFG_C"/>
    <property type="match status" value="1"/>
</dbReference>
<dbReference type="SMART" id="SM00889">
    <property type="entry name" value="EFG_IV"/>
    <property type="match status" value="1"/>
</dbReference>
<dbReference type="SUPFAM" id="SSF54980">
    <property type="entry name" value="EF-G C-terminal domain-like"/>
    <property type="match status" value="2"/>
</dbReference>
<dbReference type="SUPFAM" id="SSF52540">
    <property type="entry name" value="P-loop containing nucleoside triphosphate hydrolases"/>
    <property type="match status" value="1"/>
</dbReference>
<dbReference type="SUPFAM" id="SSF54211">
    <property type="entry name" value="Ribosomal protein S5 domain 2-like"/>
    <property type="match status" value="1"/>
</dbReference>
<dbReference type="SUPFAM" id="SSF50447">
    <property type="entry name" value="Translation proteins"/>
    <property type="match status" value="1"/>
</dbReference>
<dbReference type="PROSITE" id="PS00301">
    <property type="entry name" value="G_TR_1"/>
    <property type="match status" value="1"/>
</dbReference>
<dbReference type="PROSITE" id="PS51722">
    <property type="entry name" value="G_TR_2"/>
    <property type="match status" value="1"/>
</dbReference>
<feature type="chain" id="PRO_0000225254" description="Elongation factor 2">
    <location>
        <begin position="1"/>
        <end position="729"/>
    </location>
</feature>
<feature type="domain" description="tr-type G">
    <location>
        <begin position="19"/>
        <end position="262"/>
    </location>
</feature>
<feature type="binding site" evidence="1">
    <location>
        <begin position="28"/>
        <end position="35"/>
    </location>
    <ligand>
        <name>GTP</name>
        <dbReference type="ChEBI" id="CHEBI:37565"/>
    </ligand>
</feature>
<feature type="binding site" evidence="1">
    <location>
        <begin position="94"/>
        <end position="98"/>
    </location>
    <ligand>
        <name>GTP</name>
        <dbReference type="ChEBI" id="CHEBI:37565"/>
    </ligand>
</feature>
<feature type="binding site" evidence="1">
    <location>
        <begin position="148"/>
        <end position="151"/>
    </location>
    <ligand>
        <name>GTP</name>
        <dbReference type="ChEBI" id="CHEBI:37565"/>
    </ligand>
</feature>
<feature type="modified residue" description="Diphthamide" evidence="1">
    <location>
        <position position="597"/>
    </location>
</feature>
<sequence>MGRRKKIVQECERLMDEPEQIRNIAIAAHVDHGKTTLTDNLLAGAGMISDETAGEQLAMDTEEDEQERGITIDAANVSMTHEYEDENHLINLIDTPGHVDFGGDVTRAMRAVDGALVVVDAVEGAMPQTETVLRQALREGVKPTLFINKVDRLISELQEGPEEMQQRLTGVIGDVNELIRGMTEEMDDINEDWTVSVEDGTVGFGSALYKWGVSMPSMQRTGMDFGEIIELERADKRQELHERTPLSDVVLDMVCEHFPNPVDAQPRRIPRIWRGDADSEVAEAMELVNEDGELVMMVTDIGIDPHAGEIAAGRVFSGTIEKGQDLYVSGTAGTNRVQSVGIYMGGEREEVERVPAGNIAAVTGLKDAIAGSTVSSVEMTPFESIEHISEPVITKSVEAKNMDDLPKLIETLQQVAKEDPTIQIEINEDTGEHLISGQGELHLEVITQRIERNQGIPVNTGEPIVVFREAPQQESREVEGRSPNNHNRFYITVEPLEDDIVETIKMGDVSMDMPELERREELMEQGMDKDTAQNVETIHNTNVFIDDTKGIQHLNETMELVVEGLEEALNDGPLAAEPVEGALIRLHDARLHEDAIHRGPAQVIPAVREAVHNALIDAEIKLLEPIQEVRIDVPNEHMGAASGEIQGRRGRVDDMYQEGDLMVVEGVAPVDEMIGFSSDIRSATEGRASWNTENAGFRVMADNLQPETIDEIRERKGMKLELPEQIDYF</sequence>
<comment type="function">
    <text evidence="1">Catalyzes the GTP-dependent ribosomal translocation step during translation elongation. During this step, the ribosome changes from the pre-translocational (PRE) to the post-translocational (POST) state as the newly formed A-site-bound peptidyl-tRNA and P-site-bound deacylated tRNA move to the P and E sites, respectively. Catalyzes the coordinated movement of the two tRNA molecules, the mRNA and conformational changes in the ribosome.</text>
</comment>
<comment type="subcellular location">
    <subcellularLocation>
        <location evidence="1">Cytoplasm</location>
    </subcellularLocation>
</comment>
<comment type="similarity">
    <text evidence="1">Belongs to the TRAFAC class translation factor GTPase superfamily. Classic translation factor GTPase family. EF-G/EF-2 subfamily.</text>
</comment>
<reference key="1">
    <citation type="journal article" date="2005" name="Genome Res.">
        <title>Living with two extremes: conclusions from the genome sequence of Natronomonas pharaonis.</title>
        <authorList>
            <person name="Falb M."/>
            <person name="Pfeiffer F."/>
            <person name="Palm P."/>
            <person name="Rodewald K."/>
            <person name="Hickmann V."/>
            <person name="Tittor J."/>
            <person name="Oesterhelt D."/>
        </authorList>
    </citation>
    <scope>NUCLEOTIDE SEQUENCE [LARGE SCALE GENOMIC DNA]</scope>
    <source>
        <strain>ATCC 35678 / DSM 2160 / CIP 103997 / JCM 8858 / NBRC 14720 / NCIMB 2260 / Gabara</strain>
    </source>
</reference>
<proteinExistence type="inferred from homology"/>
<organism>
    <name type="scientific">Natronomonas pharaonis (strain ATCC 35678 / DSM 2160 / CIP 103997 / JCM 8858 / NBRC 14720 / NCIMB 2260 / Gabara)</name>
    <name type="common">Halobacterium pharaonis</name>
    <dbReference type="NCBI Taxonomy" id="348780"/>
    <lineage>
        <taxon>Archaea</taxon>
        <taxon>Methanobacteriati</taxon>
        <taxon>Methanobacteriota</taxon>
        <taxon>Stenosarchaea group</taxon>
        <taxon>Halobacteria</taxon>
        <taxon>Halobacteriales</taxon>
        <taxon>Haloarculaceae</taxon>
        <taxon>Natronomonas</taxon>
    </lineage>
</organism>
<gene>
    <name evidence="1" type="primary">fusA</name>
    <name type="ordered locus">NP_0130A</name>
</gene>
<keyword id="KW-0963">Cytoplasm</keyword>
<keyword id="KW-0251">Elongation factor</keyword>
<keyword id="KW-0342">GTP-binding</keyword>
<keyword id="KW-0547">Nucleotide-binding</keyword>
<keyword id="KW-0648">Protein biosynthesis</keyword>
<keyword id="KW-1185">Reference proteome</keyword>
<evidence type="ECO:0000255" key="1">
    <source>
        <dbReference type="HAMAP-Rule" id="MF_00054"/>
    </source>
</evidence>
<name>EF2_NATPD</name>
<protein>
    <recommendedName>
        <fullName evidence="1">Elongation factor 2</fullName>
        <shortName evidence="1">EF-2</shortName>
    </recommendedName>
</protein>
<accession>Q3IUM4</accession>